<organism>
    <name type="scientific">Escherichia coli O157:H7</name>
    <dbReference type="NCBI Taxonomy" id="83334"/>
    <lineage>
        <taxon>Bacteria</taxon>
        <taxon>Pseudomonadati</taxon>
        <taxon>Pseudomonadota</taxon>
        <taxon>Gammaproteobacteria</taxon>
        <taxon>Enterobacterales</taxon>
        <taxon>Enterobacteriaceae</taxon>
        <taxon>Escherichia</taxon>
    </lineage>
</organism>
<proteinExistence type="inferred from homology"/>
<keyword id="KW-0001">2Fe-2S</keyword>
<keyword id="KW-0028">Amino-acid biosynthesis</keyword>
<keyword id="KW-0100">Branched-chain amino acid biosynthesis</keyword>
<keyword id="KW-0408">Iron</keyword>
<keyword id="KW-0411">Iron-sulfur</keyword>
<keyword id="KW-0456">Lyase</keyword>
<keyword id="KW-0460">Magnesium</keyword>
<keyword id="KW-0479">Metal-binding</keyword>
<keyword id="KW-1185">Reference proteome</keyword>
<sequence length="616" mass="65576">MPKYRSATTTHGRNMAGARALWRATGMTDADFGKPIIAVVNSFTQFVPGHVHLRDLGKLVAEQIEAAGGVAKEFNTIAVDDGIAMGHGGMLYSLPSRELIADSVEYMVNAHCADAMVCISNCDKITPGMLMASLRLNIPVIFVSGGPMEAGKTKLSDQIIKLDLVDAMIQGADPKVSDSQSDQVERSACPTCGSCSGMFTANSMNCLTEALGLSQPGNGSLLATHSDRKQLFLNAGKRIVELTKRYYEQNDESALPRNIASKAAFENAMTLDIAMGGSTNTVLHLLAAAQEAEIDFTMSDIDKLSRKVPQLCKVAPSTQKYHMEDVHRAGGVIGILGELDRAGLLNRDVKNVLGLTLPQTLEQYDVMLTQDDAVKNMFRAGPAGIRTTQAFSQDCRWDTLDDDRANGCIRSLEHAYSKDGGLAVLYGNFAENGCIVKTAGVDDSILKFTGPAKVYESQDDAVEAILGGKVVAGDVVVIRYEGPKGGPGMQEMLYPTSFLKSMGLGKACALITDGRFSGGTSGLSIGHVSPEAASGGSIGLIEDGDLIAIDIPNRGIQLQVSDAELAARREAQEARGDKAWTPKNRERQISFALRAYASLATSADKGAVRDKSKLGG</sequence>
<protein>
    <recommendedName>
        <fullName evidence="1">Dihydroxy-acid dehydratase</fullName>
        <shortName evidence="1">DAD</shortName>
        <ecNumber evidence="1">4.2.1.9</ecNumber>
    </recommendedName>
</protein>
<feature type="initiator methionine" description="Removed">
    <location>
        <position position="1"/>
    </location>
</feature>
<feature type="chain" id="PRO_0000103467" description="Dihydroxy-acid dehydratase">
    <location>
        <begin position="2"/>
        <end position="616"/>
    </location>
</feature>
<feature type="active site" description="Proton acceptor" evidence="1">
    <location>
        <position position="517"/>
    </location>
</feature>
<feature type="binding site" evidence="1">
    <location>
        <position position="81"/>
    </location>
    <ligand>
        <name>Mg(2+)</name>
        <dbReference type="ChEBI" id="CHEBI:18420"/>
    </ligand>
</feature>
<feature type="binding site" evidence="1">
    <location>
        <position position="122"/>
    </location>
    <ligand>
        <name>[2Fe-2S] cluster</name>
        <dbReference type="ChEBI" id="CHEBI:190135"/>
    </ligand>
</feature>
<feature type="binding site" evidence="1">
    <location>
        <position position="123"/>
    </location>
    <ligand>
        <name>Mg(2+)</name>
        <dbReference type="ChEBI" id="CHEBI:18420"/>
    </ligand>
</feature>
<feature type="binding site" description="via carbamate group" evidence="1">
    <location>
        <position position="124"/>
    </location>
    <ligand>
        <name>Mg(2+)</name>
        <dbReference type="ChEBI" id="CHEBI:18420"/>
    </ligand>
</feature>
<feature type="binding site" evidence="1">
    <location>
        <position position="195"/>
    </location>
    <ligand>
        <name>[2Fe-2S] cluster</name>
        <dbReference type="ChEBI" id="CHEBI:190135"/>
    </ligand>
</feature>
<feature type="binding site" evidence="1">
    <location>
        <position position="491"/>
    </location>
    <ligand>
        <name>Mg(2+)</name>
        <dbReference type="ChEBI" id="CHEBI:18420"/>
    </ligand>
</feature>
<feature type="modified residue" description="N6-carboxylysine" evidence="1">
    <location>
        <position position="124"/>
    </location>
</feature>
<reference key="1">
    <citation type="journal article" date="2001" name="Nature">
        <title>Genome sequence of enterohaemorrhagic Escherichia coli O157:H7.</title>
        <authorList>
            <person name="Perna N.T."/>
            <person name="Plunkett G. III"/>
            <person name="Burland V."/>
            <person name="Mau B."/>
            <person name="Glasner J.D."/>
            <person name="Rose D.J."/>
            <person name="Mayhew G.F."/>
            <person name="Evans P.S."/>
            <person name="Gregor J."/>
            <person name="Kirkpatrick H.A."/>
            <person name="Posfai G."/>
            <person name="Hackett J."/>
            <person name="Klink S."/>
            <person name="Boutin A."/>
            <person name="Shao Y."/>
            <person name="Miller L."/>
            <person name="Grotbeck E.J."/>
            <person name="Davis N.W."/>
            <person name="Lim A."/>
            <person name="Dimalanta E.T."/>
            <person name="Potamousis K."/>
            <person name="Apodaca J."/>
            <person name="Anantharaman T.S."/>
            <person name="Lin J."/>
            <person name="Yen G."/>
            <person name="Schwartz D.C."/>
            <person name="Welch R.A."/>
            <person name="Blattner F.R."/>
        </authorList>
    </citation>
    <scope>NUCLEOTIDE SEQUENCE [LARGE SCALE GENOMIC DNA]</scope>
    <source>
        <strain>O157:H7 / EDL933 / ATCC 700927 / EHEC</strain>
    </source>
</reference>
<reference key="2">
    <citation type="journal article" date="2001" name="DNA Res.">
        <title>Complete genome sequence of enterohemorrhagic Escherichia coli O157:H7 and genomic comparison with a laboratory strain K-12.</title>
        <authorList>
            <person name="Hayashi T."/>
            <person name="Makino K."/>
            <person name="Ohnishi M."/>
            <person name="Kurokawa K."/>
            <person name="Ishii K."/>
            <person name="Yokoyama K."/>
            <person name="Han C.-G."/>
            <person name="Ohtsubo E."/>
            <person name="Nakayama K."/>
            <person name="Murata T."/>
            <person name="Tanaka M."/>
            <person name="Tobe T."/>
            <person name="Iida T."/>
            <person name="Takami H."/>
            <person name="Honda T."/>
            <person name="Sasakawa C."/>
            <person name="Ogasawara N."/>
            <person name="Yasunaga T."/>
            <person name="Kuhara S."/>
            <person name="Shiba T."/>
            <person name="Hattori M."/>
            <person name="Shinagawa H."/>
        </authorList>
    </citation>
    <scope>NUCLEOTIDE SEQUENCE [LARGE SCALE GENOMIC DNA]</scope>
    <source>
        <strain>O157:H7 / Sakai / RIMD 0509952 / EHEC</strain>
    </source>
</reference>
<gene>
    <name evidence="1" type="primary">ilvD</name>
    <name type="ordered locus">Z5282</name>
    <name type="ordered locus">ECs4705</name>
</gene>
<accession>Q8XAV1</accession>
<dbReference type="EC" id="4.2.1.9" evidence="1"/>
<dbReference type="EMBL" id="AE005174">
    <property type="protein sequence ID" value="AAG58966.1"/>
    <property type="molecule type" value="Genomic_DNA"/>
</dbReference>
<dbReference type="EMBL" id="BA000007">
    <property type="protein sequence ID" value="BAB38128.1"/>
    <property type="molecule type" value="Genomic_DNA"/>
</dbReference>
<dbReference type="PIR" id="A91217">
    <property type="entry name" value="A91217"/>
</dbReference>
<dbReference type="PIR" id="B86063">
    <property type="entry name" value="B86063"/>
</dbReference>
<dbReference type="RefSeq" id="NP_312732.1">
    <property type="nucleotide sequence ID" value="NC_002695.1"/>
</dbReference>
<dbReference type="RefSeq" id="WP_001127409.1">
    <property type="nucleotide sequence ID" value="NZ_VOAI01000017.1"/>
</dbReference>
<dbReference type="SMR" id="Q8XAV1"/>
<dbReference type="STRING" id="155864.Z5282"/>
<dbReference type="GeneID" id="915282"/>
<dbReference type="KEGG" id="ece:Z5282"/>
<dbReference type="KEGG" id="ecs:ECs_4705"/>
<dbReference type="PATRIC" id="fig|386585.9.peg.4910"/>
<dbReference type="eggNOG" id="COG0129">
    <property type="taxonomic scope" value="Bacteria"/>
</dbReference>
<dbReference type="HOGENOM" id="CLU_014271_4_2_6"/>
<dbReference type="OMA" id="STQGRNM"/>
<dbReference type="UniPathway" id="UPA00047">
    <property type="reaction ID" value="UER00057"/>
</dbReference>
<dbReference type="UniPathway" id="UPA00049">
    <property type="reaction ID" value="UER00061"/>
</dbReference>
<dbReference type="Proteomes" id="UP000000558">
    <property type="component" value="Chromosome"/>
</dbReference>
<dbReference type="Proteomes" id="UP000002519">
    <property type="component" value="Chromosome"/>
</dbReference>
<dbReference type="GO" id="GO:0005829">
    <property type="term" value="C:cytosol"/>
    <property type="evidence" value="ECO:0007669"/>
    <property type="project" value="TreeGrafter"/>
</dbReference>
<dbReference type="GO" id="GO:0051537">
    <property type="term" value="F:2 iron, 2 sulfur cluster binding"/>
    <property type="evidence" value="ECO:0007669"/>
    <property type="project" value="UniProtKB-UniRule"/>
</dbReference>
<dbReference type="GO" id="GO:0004160">
    <property type="term" value="F:dihydroxy-acid dehydratase activity"/>
    <property type="evidence" value="ECO:0007669"/>
    <property type="project" value="UniProtKB-UniRule"/>
</dbReference>
<dbReference type="GO" id="GO:0000287">
    <property type="term" value="F:magnesium ion binding"/>
    <property type="evidence" value="ECO:0007669"/>
    <property type="project" value="UniProtKB-UniRule"/>
</dbReference>
<dbReference type="GO" id="GO:0009097">
    <property type="term" value="P:isoleucine biosynthetic process"/>
    <property type="evidence" value="ECO:0007669"/>
    <property type="project" value="UniProtKB-UniRule"/>
</dbReference>
<dbReference type="GO" id="GO:0009099">
    <property type="term" value="P:L-valine biosynthetic process"/>
    <property type="evidence" value="ECO:0007669"/>
    <property type="project" value="UniProtKB-UniRule"/>
</dbReference>
<dbReference type="FunFam" id="3.50.30.80:FF:000001">
    <property type="entry name" value="Dihydroxy-acid dehydratase"/>
    <property type="match status" value="1"/>
</dbReference>
<dbReference type="Gene3D" id="3.50.30.80">
    <property type="entry name" value="IlvD/EDD C-terminal domain-like"/>
    <property type="match status" value="1"/>
</dbReference>
<dbReference type="HAMAP" id="MF_00012">
    <property type="entry name" value="IlvD"/>
    <property type="match status" value="1"/>
</dbReference>
<dbReference type="InterPro" id="IPR042096">
    <property type="entry name" value="Dihydro-acid_dehy_C"/>
</dbReference>
<dbReference type="InterPro" id="IPR004404">
    <property type="entry name" value="DihydroxyA_deHydtase"/>
</dbReference>
<dbReference type="InterPro" id="IPR020558">
    <property type="entry name" value="DiOHA_6PGluconate_deHydtase_CS"/>
</dbReference>
<dbReference type="InterPro" id="IPR056740">
    <property type="entry name" value="ILV_EDD_C"/>
</dbReference>
<dbReference type="InterPro" id="IPR000581">
    <property type="entry name" value="ILV_EDD_N"/>
</dbReference>
<dbReference type="InterPro" id="IPR037237">
    <property type="entry name" value="IlvD/EDD_N"/>
</dbReference>
<dbReference type="NCBIfam" id="TIGR00110">
    <property type="entry name" value="ilvD"/>
    <property type="match status" value="1"/>
</dbReference>
<dbReference type="NCBIfam" id="NF009103">
    <property type="entry name" value="PRK12448.1"/>
    <property type="match status" value="1"/>
</dbReference>
<dbReference type="PANTHER" id="PTHR43661">
    <property type="entry name" value="D-XYLONATE DEHYDRATASE"/>
    <property type="match status" value="1"/>
</dbReference>
<dbReference type="PANTHER" id="PTHR43661:SF3">
    <property type="entry name" value="D-XYLONATE DEHYDRATASE YAGF-RELATED"/>
    <property type="match status" value="1"/>
</dbReference>
<dbReference type="Pfam" id="PF24877">
    <property type="entry name" value="ILV_EDD_C"/>
    <property type="match status" value="1"/>
</dbReference>
<dbReference type="Pfam" id="PF00920">
    <property type="entry name" value="ILVD_EDD_N"/>
    <property type="match status" value="1"/>
</dbReference>
<dbReference type="SUPFAM" id="SSF143975">
    <property type="entry name" value="IlvD/EDD N-terminal domain-like"/>
    <property type="match status" value="1"/>
</dbReference>
<dbReference type="SUPFAM" id="SSF52016">
    <property type="entry name" value="LeuD/IlvD-like"/>
    <property type="match status" value="1"/>
</dbReference>
<dbReference type="PROSITE" id="PS00886">
    <property type="entry name" value="ILVD_EDD_1"/>
    <property type="match status" value="1"/>
</dbReference>
<dbReference type="PROSITE" id="PS00887">
    <property type="entry name" value="ILVD_EDD_2"/>
    <property type="match status" value="1"/>
</dbReference>
<evidence type="ECO:0000255" key="1">
    <source>
        <dbReference type="HAMAP-Rule" id="MF_00012"/>
    </source>
</evidence>
<comment type="function">
    <text evidence="1">Functions in the biosynthesis of branched-chain amino acids. Catalyzes the dehydration of (2R,3R)-2,3-dihydroxy-3-methylpentanoate (2,3-dihydroxy-3-methylvalerate) into 2-oxo-3-methylpentanoate (2-oxo-3-methylvalerate) and of (2R)-2,3-dihydroxy-3-methylbutanoate (2,3-dihydroxyisovalerate) into 2-oxo-3-methylbutanoate (2-oxoisovalerate), the penultimate precursor to L-isoleucine and L-valine, respectively.</text>
</comment>
<comment type="catalytic activity">
    <reaction evidence="1">
        <text>(2R)-2,3-dihydroxy-3-methylbutanoate = 3-methyl-2-oxobutanoate + H2O</text>
        <dbReference type="Rhea" id="RHEA:24809"/>
        <dbReference type="ChEBI" id="CHEBI:11851"/>
        <dbReference type="ChEBI" id="CHEBI:15377"/>
        <dbReference type="ChEBI" id="CHEBI:49072"/>
        <dbReference type="EC" id="4.2.1.9"/>
    </reaction>
    <physiologicalReaction direction="left-to-right" evidence="1">
        <dbReference type="Rhea" id="RHEA:24810"/>
    </physiologicalReaction>
</comment>
<comment type="catalytic activity">
    <reaction evidence="1">
        <text>(2R,3R)-2,3-dihydroxy-3-methylpentanoate = (S)-3-methyl-2-oxopentanoate + H2O</text>
        <dbReference type="Rhea" id="RHEA:27694"/>
        <dbReference type="ChEBI" id="CHEBI:15377"/>
        <dbReference type="ChEBI" id="CHEBI:35146"/>
        <dbReference type="ChEBI" id="CHEBI:49258"/>
        <dbReference type="EC" id="4.2.1.9"/>
    </reaction>
    <physiologicalReaction direction="left-to-right" evidence="1">
        <dbReference type="Rhea" id="RHEA:27695"/>
    </physiologicalReaction>
</comment>
<comment type="cofactor">
    <cofactor evidence="1">
        <name>[2Fe-2S] cluster</name>
        <dbReference type="ChEBI" id="CHEBI:190135"/>
    </cofactor>
    <text evidence="1">Binds 1 [2Fe-2S] cluster per subunit. This cluster acts as a Lewis acid cofactor.</text>
</comment>
<comment type="cofactor">
    <cofactor evidence="1">
        <name>Mg(2+)</name>
        <dbReference type="ChEBI" id="CHEBI:18420"/>
    </cofactor>
</comment>
<comment type="pathway">
    <text evidence="1">Amino-acid biosynthesis; L-isoleucine biosynthesis; L-isoleucine from 2-oxobutanoate: step 3/4.</text>
</comment>
<comment type="pathway">
    <text evidence="1">Amino-acid biosynthesis; L-valine biosynthesis; L-valine from pyruvate: step 3/4.</text>
</comment>
<comment type="subunit">
    <text evidence="1">Homodimer.</text>
</comment>
<comment type="similarity">
    <text evidence="1">Belongs to the IlvD/Edd family.</text>
</comment>
<name>ILVD_ECO57</name>